<sequence>MESIAAATFTPSRLAARPATPAAAAAPVRARAAVAAGGRRRTSRRGGVRCSAGKPEASAVINGSAAARAAEEDRRRFFEAAERGSGKGNLVPMWECIVSDHLTPVLAYRCLVPEDNMETPSFLFESVEQGPEGTTNVGRYSMVGAHPVMEVVAKEHKVTIMDHEKGKVTEQVVDDPMQIPRSMMEGWHPQQIDQLPDSFTGGWVGFFSYDTVRYVEKKKLPFSGAPQDDRNLPDVHLGLYDDVLVFDNVEKKVYVIHWVNLDRHATTEDAFQDGKSRLNLLLSKVHNSNVPKLSPGFVKLHTRQFGTPLNKSTMTSDEYKNAVMQAKEHIMAGDIFQIVLSQRFERRTYANPFEVYRALRIVNPSPYMAYVQARGCVLVASSPEILTRVRKGKIINRPLAGTVRRGKTEKEDEMQEQQLLSDEKQCAEHIMLVDLGRNDVGKVSKPGSVKVEKLMNIERYSHVMHISSTVSGELDDHLQSWDALRAALPVGTVSGAPKVKAMELIDELEVTRRGPYSGGLGGISFDGDMLIALALRTIVFSTAPSHNTMYSYKDTERRREWVAHLQAGAGIVADSSPDDEQRECENKAAALARAIDLAESAFVDKE</sequence>
<reference key="1">
    <citation type="journal article" date="2001" name="Plant Physiol.">
        <title>Characterization of rice anthranilate synthase alpha-subunit genes OASA1 and OASA2. Tryptophan accumulation in transgenic rice expressing a feedback-insensitive mutant of OASA1.</title>
        <authorList>
            <person name="Tozawa Y."/>
            <person name="Hasegawa H."/>
            <person name="Terakawa T."/>
            <person name="Wakasa K."/>
        </authorList>
    </citation>
    <scope>NUCLEOTIDE SEQUENCE [MRNA]</scope>
    <scope>INDUCTION</scope>
    <source>
        <strain>cv. Nipponbare</strain>
    </source>
</reference>
<reference key="2">
    <citation type="journal article" date="2005" name="Genome Res.">
        <title>Sequence, annotation, and analysis of synteny between rice chromosome 3 and diverged grass species.</title>
        <authorList>
            <consortium name="The rice chromosome 3 sequencing consortium"/>
            <person name="Buell C.R."/>
            <person name="Yuan Q."/>
            <person name="Ouyang S."/>
            <person name="Liu J."/>
            <person name="Zhu W."/>
            <person name="Wang A."/>
            <person name="Maiti R."/>
            <person name="Haas B."/>
            <person name="Wortman J."/>
            <person name="Pertea M."/>
            <person name="Jones K.M."/>
            <person name="Kim M."/>
            <person name="Overton L."/>
            <person name="Tsitrin T."/>
            <person name="Fadrosh D."/>
            <person name="Bera J."/>
            <person name="Weaver B."/>
            <person name="Jin S."/>
            <person name="Johri S."/>
            <person name="Reardon M."/>
            <person name="Webb K."/>
            <person name="Hill J."/>
            <person name="Moffat K."/>
            <person name="Tallon L."/>
            <person name="Van Aken S."/>
            <person name="Lewis M."/>
            <person name="Utterback T."/>
            <person name="Feldblyum T."/>
            <person name="Zismann V."/>
            <person name="Iobst S."/>
            <person name="Hsiao J."/>
            <person name="de Vazeille A.R."/>
            <person name="Salzberg S.L."/>
            <person name="White O."/>
            <person name="Fraser C.M."/>
            <person name="Yu Y."/>
            <person name="Kim H."/>
            <person name="Rambo T."/>
            <person name="Currie J."/>
            <person name="Collura K."/>
            <person name="Kernodle-Thompson S."/>
            <person name="Wei F."/>
            <person name="Kudrna K."/>
            <person name="Ammiraju J.S.S."/>
            <person name="Luo M."/>
            <person name="Goicoechea J.L."/>
            <person name="Wing R.A."/>
            <person name="Henry D."/>
            <person name="Oates R."/>
            <person name="Palmer M."/>
            <person name="Pries G."/>
            <person name="Saski C."/>
            <person name="Simmons J."/>
            <person name="Soderlund C."/>
            <person name="Nelson W."/>
            <person name="de la Bastide M."/>
            <person name="Spiegel L."/>
            <person name="Nascimento L."/>
            <person name="Huang E."/>
            <person name="Preston R."/>
            <person name="Zutavern T."/>
            <person name="Palmer L."/>
            <person name="O'Shaughnessy A."/>
            <person name="Dike S."/>
            <person name="McCombie W.R."/>
            <person name="Minx P."/>
            <person name="Cordum H."/>
            <person name="Wilson R."/>
            <person name="Jin W."/>
            <person name="Lee H.R."/>
            <person name="Jiang J."/>
            <person name="Jackson S."/>
        </authorList>
    </citation>
    <scope>NUCLEOTIDE SEQUENCE [LARGE SCALE GENOMIC DNA]</scope>
    <source>
        <strain>cv. Nipponbare</strain>
    </source>
</reference>
<reference key="3">
    <citation type="journal article" date="2005" name="Nature">
        <title>The map-based sequence of the rice genome.</title>
        <authorList>
            <consortium name="International rice genome sequencing project (IRGSP)"/>
        </authorList>
    </citation>
    <scope>NUCLEOTIDE SEQUENCE [LARGE SCALE GENOMIC DNA]</scope>
    <source>
        <strain>cv. Nipponbare</strain>
    </source>
</reference>
<reference key="4">
    <citation type="journal article" date="2008" name="Nucleic Acids Res.">
        <title>The rice annotation project database (RAP-DB): 2008 update.</title>
        <authorList>
            <consortium name="The rice annotation project (RAP)"/>
        </authorList>
    </citation>
    <scope>GENOME REANNOTATION</scope>
    <source>
        <strain>cv. Nipponbare</strain>
    </source>
</reference>
<reference key="5">
    <citation type="journal article" date="2013" name="Rice">
        <title>Improvement of the Oryza sativa Nipponbare reference genome using next generation sequence and optical map data.</title>
        <authorList>
            <person name="Kawahara Y."/>
            <person name="de la Bastide M."/>
            <person name="Hamilton J.P."/>
            <person name="Kanamori H."/>
            <person name="McCombie W.R."/>
            <person name="Ouyang S."/>
            <person name="Schwartz D.C."/>
            <person name="Tanaka T."/>
            <person name="Wu J."/>
            <person name="Zhou S."/>
            <person name="Childs K.L."/>
            <person name="Davidson R.M."/>
            <person name="Lin H."/>
            <person name="Quesada-Ocampo L."/>
            <person name="Vaillancourt B."/>
            <person name="Sakai H."/>
            <person name="Lee S.S."/>
            <person name="Kim J."/>
            <person name="Numa H."/>
            <person name="Itoh T."/>
            <person name="Buell C.R."/>
            <person name="Matsumoto T."/>
        </authorList>
    </citation>
    <scope>GENOME REANNOTATION</scope>
    <source>
        <strain>cv. Nipponbare</strain>
    </source>
</reference>
<reference key="6">
    <citation type="journal article" date="2004" name="Plant Mol. Biol.">
        <title>In vitro reconstitution of rice anthranilate synthase: distinct functional properties of the alpha subunits OASA1 and OASA2.</title>
        <authorList>
            <person name="Kanno T."/>
            <person name="Kasai K."/>
            <person name="Ikejiri-Kanno Y."/>
            <person name="Wakasa K."/>
            <person name="Tozawa Y."/>
        </authorList>
    </citation>
    <scope>FUNCTION</scope>
    <scope>BIOPHYSICOCHEMICAL PROPERTIES</scope>
    <scope>CATALYTIC ACTIVITY</scope>
    <scope>PATHWAY</scope>
</reference>
<reference key="7">
    <citation type="journal article" date="2008" name="Plant J.">
        <title>The tryptophan pathway is involved in the defense responses of rice against pathogenic infection via serotonin production.</title>
        <authorList>
            <person name="Ishihara A."/>
            <person name="Hashimoto Y."/>
            <person name="Tanaka C."/>
            <person name="Dubouzet J.G."/>
            <person name="Nakao T."/>
            <person name="Matsuda F."/>
            <person name="Nishioka T."/>
            <person name="Miyagawa H."/>
            <person name="Wakasa K."/>
        </authorList>
    </citation>
    <scope>INDUCTION</scope>
</reference>
<protein>
    <recommendedName>
        <fullName evidence="7">Anthranilate synthase alpha subunit 2, chloroplastic</fullName>
        <shortName evidence="7">OsASA2</shortName>
        <ecNumber evidence="5">4.1.3.27</ecNumber>
    </recommendedName>
</protein>
<keyword id="KW-0028">Amino-acid biosynthesis</keyword>
<keyword id="KW-0057">Aromatic amino acid biosynthesis</keyword>
<keyword id="KW-0150">Chloroplast</keyword>
<keyword id="KW-0456">Lyase</keyword>
<keyword id="KW-0934">Plastid</keyword>
<keyword id="KW-1185">Reference proteome</keyword>
<keyword id="KW-0809">Transit peptide</keyword>
<keyword id="KW-0822">Tryptophan biosynthesis</keyword>
<comment type="function">
    <text evidence="5">Part of a heterotetrameric complex that catalyzes the two-step biosynthesis of anthranilate, an intermediate in the biosynthesis of L-tryptophan. In the first step, the glutamine-binding beta subunit of anthranilate synthase (AS) provides the glutamine amidotransferase activity which generates ammonia as a substrate that, along with chorismate, is used in the second step, catalyzed by the large alpha subunit of AS to produce anthranilate.</text>
</comment>
<comment type="catalytic activity">
    <reaction evidence="5">
        <text>chorismate + L-glutamine = anthranilate + pyruvate + L-glutamate + H(+)</text>
        <dbReference type="Rhea" id="RHEA:21732"/>
        <dbReference type="ChEBI" id="CHEBI:15361"/>
        <dbReference type="ChEBI" id="CHEBI:15378"/>
        <dbReference type="ChEBI" id="CHEBI:16567"/>
        <dbReference type="ChEBI" id="CHEBI:29748"/>
        <dbReference type="ChEBI" id="CHEBI:29985"/>
        <dbReference type="ChEBI" id="CHEBI:58359"/>
        <dbReference type="EC" id="4.1.3.27"/>
    </reaction>
    <physiologicalReaction direction="left-to-right" evidence="5">
        <dbReference type="Rhea" id="RHEA:21733"/>
    </physiologicalReaction>
</comment>
<comment type="activity regulation">
    <text evidence="1">Feedback inhibition by tryptophan.</text>
</comment>
<comment type="biophysicochemical properties">
    <kinetics>
        <KM evidence="5">178 uM for chorismate (for recombinant ASA2 and ASB1 proteins synthesized with the wheat germ cell-free system)</KM>
        <Vmax evidence="5">231.0 nmol/min/mg enzyme toward chorismate (for recombinant ASA2 and ASB1 proteins synthesized with the wheat germ cell-free system)</Vmax>
        <text evidence="5">kcat is 14.6 sec(-1) with chorismate as substrate (for recombinant ASA2 and ASB1 proteins synthesized with the wheat germ cell-free system).</text>
    </kinetics>
</comment>
<comment type="pathway">
    <text evidence="5">Amino-acid biosynthesis; L-tryptophan biosynthesis; L-tryptophan from chorismate: step 1/5.</text>
</comment>
<comment type="subunit">
    <text evidence="2">Heterotetramer consisting of two non-identical subunits: a beta subunit and a large alpha subunit.</text>
</comment>
<comment type="subcellular location">
    <subcellularLocation>
        <location evidence="3">Plastid</location>
        <location evidence="3">Chloroplast</location>
    </subcellularLocation>
</comment>
<comment type="induction">
    <text evidence="4 6">By chitin oligosaccharide elicitor and the phytopathogenic fungus Bipolaris oryzae.</text>
</comment>
<comment type="similarity">
    <text evidence="8">Belongs to the anthranilate synthase component I family.</text>
</comment>
<proteinExistence type="evidence at protein level"/>
<feature type="transit peptide" description="Chloroplast" evidence="3">
    <location>
        <begin position="1"/>
        <end position="49"/>
    </location>
</feature>
<feature type="chain" id="PRO_0000425664" description="Anthranilate synthase alpha subunit 2, chloroplastic">
    <location>
        <begin position="50"/>
        <end position="606"/>
    </location>
</feature>
<accession>Q9XJ29</accession>
<accession>A0A0P0VVQ9</accession>
<evidence type="ECO:0000250" key="1"/>
<evidence type="ECO:0000250" key="2">
    <source>
        <dbReference type="UniProtKB" id="P00897"/>
    </source>
</evidence>
<evidence type="ECO:0000255" key="3"/>
<evidence type="ECO:0000269" key="4">
    <source>
    </source>
</evidence>
<evidence type="ECO:0000269" key="5">
    <source>
    </source>
</evidence>
<evidence type="ECO:0000269" key="6">
    <source>
    </source>
</evidence>
<evidence type="ECO:0000303" key="7">
    <source>
    </source>
</evidence>
<evidence type="ECO:0000305" key="8"/>
<organism>
    <name type="scientific">Oryza sativa subsp. japonica</name>
    <name type="common">Rice</name>
    <dbReference type="NCBI Taxonomy" id="39947"/>
    <lineage>
        <taxon>Eukaryota</taxon>
        <taxon>Viridiplantae</taxon>
        <taxon>Streptophyta</taxon>
        <taxon>Embryophyta</taxon>
        <taxon>Tracheophyta</taxon>
        <taxon>Spermatophyta</taxon>
        <taxon>Magnoliopsida</taxon>
        <taxon>Liliopsida</taxon>
        <taxon>Poales</taxon>
        <taxon>Poaceae</taxon>
        <taxon>BOP clade</taxon>
        <taxon>Oryzoideae</taxon>
        <taxon>Oryzeae</taxon>
        <taxon>Oryzinae</taxon>
        <taxon>Oryza</taxon>
        <taxon>Oryza sativa</taxon>
    </lineage>
</organism>
<gene>
    <name evidence="7" type="primary">ASA2</name>
    <name evidence="7" type="synonym">OASA2</name>
    <name type="ordered locus">Os03g0264400</name>
    <name type="ordered locus">LOC_Os03g15780</name>
</gene>
<name>ASA2_ORYSJ</name>
<dbReference type="EC" id="4.1.3.27" evidence="5"/>
<dbReference type="EMBL" id="AB022603">
    <property type="protein sequence ID" value="BAA82095.1"/>
    <property type="molecule type" value="mRNA"/>
</dbReference>
<dbReference type="EMBL" id="DP000009">
    <property type="protein sequence ID" value="ABF95122.1"/>
    <property type="molecule type" value="Genomic_DNA"/>
</dbReference>
<dbReference type="EMBL" id="AP008209">
    <property type="protein sequence ID" value="BAF11555.1"/>
    <property type="molecule type" value="Genomic_DNA"/>
</dbReference>
<dbReference type="EMBL" id="AP014959">
    <property type="protein sequence ID" value="BAS83390.1"/>
    <property type="molecule type" value="Genomic_DNA"/>
</dbReference>
<dbReference type="RefSeq" id="NP_001389055.1">
    <property type="nucleotide sequence ID" value="NM_001402126.1"/>
</dbReference>
<dbReference type="RefSeq" id="XP_015631311.1">
    <property type="nucleotide sequence ID" value="XM_015775825.1"/>
</dbReference>
<dbReference type="SMR" id="Q9XJ29"/>
<dbReference type="FunCoup" id="Q9XJ29">
    <property type="interactions" value="299"/>
</dbReference>
<dbReference type="STRING" id="39947.Q9XJ29"/>
<dbReference type="PaxDb" id="39947-Q9XJ29"/>
<dbReference type="EnsemblPlants" id="Os03t0264400-01">
    <property type="protein sequence ID" value="Os03t0264400-01"/>
    <property type="gene ID" value="Os03g0264400"/>
</dbReference>
<dbReference type="GeneID" id="4332341"/>
<dbReference type="Gramene" id="Os03t0264400-01">
    <property type="protein sequence ID" value="Os03t0264400-01"/>
    <property type="gene ID" value="Os03g0264400"/>
</dbReference>
<dbReference type="KEGG" id="dosa:Os03g0264400"/>
<dbReference type="eggNOG" id="KOG1223">
    <property type="taxonomic scope" value="Eukaryota"/>
</dbReference>
<dbReference type="InParanoid" id="Q9XJ29"/>
<dbReference type="OMA" id="GCVGYLD"/>
<dbReference type="OrthoDB" id="1865897at2759"/>
<dbReference type="PlantReactome" id="R-OSA-1119494">
    <property type="pathway name" value="Tryptophan biosynthesis"/>
</dbReference>
<dbReference type="UniPathway" id="UPA00035">
    <property type="reaction ID" value="UER00040"/>
</dbReference>
<dbReference type="Proteomes" id="UP000000763">
    <property type="component" value="Chromosome 3"/>
</dbReference>
<dbReference type="Proteomes" id="UP000059680">
    <property type="component" value="Chromosome 3"/>
</dbReference>
<dbReference type="ExpressionAtlas" id="Q9XJ29">
    <property type="expression patterns" value="baseline and differential"/>
</dbReference>
<dbReference type="GO" id="GO:0005950">
    <property type="term" value="C:anthranilate synthase complex"/>
    <property type="evidence" value="ECO:0000304"/>
    <property type="project" value="UniProtKB"/>
</dbReference>
<dbReference type="GO" id="GO:0009507">
    <property type="term" value="C:chloroplast"/>
    <property type="evidence" value="ECO:0007669"/>
    <property type="project" value="UniProtKB-SubCell"/>
</dbReference>
<dbReference type="GO" id="GO:0004049">
    <property type="term" value="F:anthranilate synthase activity"/>
    <property type="evidence" value="ECO:0000314"/>
    <property type="project" value="UniProtKB"/>
</dbReference>
<dbReference type="GO" id="GO:0000162">
    <property type="term" value="P:L-tryptophan biosynthetic process"/>
    <property type="evidence" value="ECO:0000314"/>
    <property type="project" value="UniProtKB"/>
</dbReference>
<dbReference type="FunFam" id="3.60.120.10:FF:000003">
    <property type="entry name" value="Anthranilate synthase component 1"/>
    <property type="match status" value="1"/>
</dbReference>
<dbReference type="Gene3D" id="3.60.120.10">
    <property type="entry name" value="Anthranilate synthase"/>
    <property type="match status" value="1"/>
</dbReference>
<dbReference type="InterPro" id="IPR005801">
    <property type="entry name" value="ADC_synthase"/>
</dbReference>
<dbReference type="InterPro" id="IPR019999">
    <property type="entry name" value="Anth_synth_I-like"/>
</dbReference>
<dbReference type="InterPro" id="IPR006805">
    <property type="entry name" value="Anth_synth_I_N"/>
</dbReference>
<dbReference type="InterPro" id="IPR005256">
    <property type="entry name" value="Anth_synth_I_PabB"/>
</dbReference>
<dbReference type="InterPro" id="IPR015890">
    <property type="entry name" value="Chorismate_C"/>
</dbReference>
<dbReference type="NCBIfam" id="TIGR00564">
    <property type="entry name" value="trpE_most"/>
    <property type="match status" value="1"/>
</dbReference>
<dbReference type="PANTHER" id="PTHR11236">
    <property type="entry name" value="AMINOBENZOATE/ANTHRANILATE SYNTHASE"/>
    <property type="match status" value="1"/>
</dbReference>
<dbReference type="PANTHER" id="PTHR11236:SF32">
    <property type="entry name" value="ANTHRANILATE SYNTHASE ALPHA SUBUNIT 2, CHLOROPLASTIC"/>
    <property type="match status" value="1"/>
</dbReference>
<dbReference type="Pfam" id="PF04715">
    <property type="entry name" value="Anth_synt_I_N"/>
    <property type="match status" value="1"/>
</dbReference>
<dbReference type="Pfam" id="PF00425">
    <property type="entry name" value="Chorismate_bind"/>
    <property type="match status" value="1"/>
</dbReference>
<dbReference type="PRINTS" id="PR00095">
    <property type="entry name" value="ANTSNTHASEI"/>
</dbReference>
<dbReference type="SUPFAM" id="SSF56322">
    <property type="entry name" value="ADC synthase"/>
    <property type="match status" value="1"/>
</dbReference>